<organism>
    <name type="scientific">Vibrio parahaemolyticus serotype O3:K6 (strain RIMD 2210633)</name>
    <dbReference type="NCBI Taxonomy" id="223926"/>
    <lineage>
        <taxon>Bacteria</taxon>
        <taxon>Pseudomonadati</taxon>
        <taxon>Pseudomonadota</taxon>
        <taxon>Gammaproteobacteria</taxon>
        <taxon>Vibrionales</taxon>
        <taxon>Vibrionaceae</taxon>
        <taxon>Vibrio</taxon>
    </lineage>
</organism>
<keyword id="KW-0963">Cytoplasm</keyword>
<keyword id="KW-0570">Pentose shunt</keyword>
<keyword id="KW-0704">Schiff base</keyword>
<keyword id="KW-0808">Transferase</keyword>
<sequence length="316" mass="34806">MSNKLEQLRKLTTVVADTGEIDAIKKYQPEDATTNPSLILKAAQIAEYAPLIDASIEYAKAQSNDKAQQVQDTCDMLAVNIGKEILKTIPGRISTEVDARLSYDMEGSVAKARQLVKMYNDAGITNDRILIKLASTWEGIRAAEILEKEGINCNLTLLFSFAQARACAEAGVFLISPFVGRIMDWYKAKEGRDFEASEDPGVLSVTKIYNYYKEYGYKTVVMGASFRNIGEILELAGCDRLTIAPALLAELEAAEGEVVEKLVDSKGAAERPAPMTHAEFLWEHNQDPMAVEKLAEGIRNFAVDQGKLEAMIEAKL</sequence>
<evidence type="ECO:0000250" key="1"/>
<evidence type="ECO:0000255" key="2">
    <source>
        <dbReference type="HAMAP-Rule" id="MF_00492"/>
    </source>
</evidence>
<protein>
    <recommendedName>
        <fullName evidence="2">Transaldolase</fullName>
        <ecNumber evidence="2">2.2.1.2</ecNumber>
    </recommendedName>
</protein>
<comment type="function">
    <text evidence="2">Transaldolase is important for the balance of metabolites in the pentose-phosphate pathway.</text>
</comment>
<comment type="catalytic activity">
    <reaction evidence="2">
        <text>D-sedoheptulose 7-phosphate + D-glyceraldehyde 3-phosphate = D-erythrose 4-phosphate + beta-D-fructose 6-phosphate</text>
        <dbReference type="Rhea" id="RHEA:17053"/>
        <dbReference type="ChEBI" id="CHEBI:16897"/>
        <dbReference type="ChEBI" id="CHEBI:57483"/>
        <dbReference type="ChEBI" id="CHEBI:57634"/>
        <dbReference type="ChEBI" id="CHEBI:59776"/>
        <dbReference type="EC" id="2.2.1.2"/>
    </reaction>
</comment>
<comment type="pathway">
    <text evidence="2">Carbohydrate degradation; pentose phosphate pathway; D-glyceraldehyde 3-phosphate and beta-D-fructose 6-phosphate from D-ribose 5-phosphate and D-xylulose 5-phosphate (non-oxidative stage): step 2/3.</text>
</comment>
<comment type="subunit">
    <text evidence="1">Homodimer.</text>
</comment>
<comment type="subcellular location">
    <subcellularLocation>
        <location evidence="2">Cytoplasm</location>
    </subcellularLocation>
</comment>
<comment type="similarity">
    <text evidence="2">Belongs to the transaldolase family. Type 1 subfamily.</text>
</comment>
<accession>Q87GY5</accession>
<name>TAL_VIBPA</name>
<dbReference type="EC" id="2.2.1.2" evidence="2"/>
<dbReference type="EMBL" id="BA000032">
    <property type="protein sequence ID" value="BAC62523.1"/>
    <property type="molecule type" value="Genomic_DNA"/>
</dbReference>
<dbReference type="RefSeq" id="NP_800690.1">
    <property type="nucleotide sequence ID" value="NC_004605.1"/>
</dbReference>
<dbReference type="RefSeq" id="WP_005463537.1">
    <property type="nucleotide sequence ID" value="NC_004605.1"/>
</dbReference>
<dbReference type="SMR" id="Q87GY5"/>
<dbReference type="GeneID" id="1191876"/>
<dbReference type="KEGG" id="vpa:VPA1180"/>
<dbReference type="PATRIC" id="fig|223926.6.peg.4106"/>
<dbReference type="eggNOG" id="COG0176">
    <property type="taxonomic scope" value="Bacteria"/>
</dbReference>
<dbReference type="HOGENOM" id="CLU_047470_0_1_6"/>
<dbReference type="UniPathway" id="UPA00115">
    <property type="reaction ID" value="UER00414"/>
</dbReference>
<dbReference type="Proteomes" id="UP000002493">
    <property type="component" value="Chromosome 2"/>
</dbReference>
<dbReference type="GO" id="GO:0005829">
    <property type="term" value="C:cytosol"/>
    <property type="evidence" value="ECO:0007669"/>
    <property type="project" value="TreeGrafter"/>
</dbReference>
<dbReference type="GO" id="GO:0004801">
    <property type="term" value="F:transaldolase activity"/>
    <property type="evidence" value="ECO:0000250"/>
    <property type="project" value="UniProtKB"/>
</dbReference>
<dbReference type="GO" id="GO:0005975">
    <property type="term" value="P:carbohydrate metabolic process"/>
    <property type="evidence" value="ECO:0007669"/>
    <property type="project" value="InterPro"/>
</dbReference>
<dbReference type="GO" id="GO:0006098">
    <property type="term" value="P:pentose-phosphate shunt"/>
    <property type="evidence" value="ECO:0007669"/>
    <property type="project" value="UniProtKB-UniRule"/>
</dbReference>
<dbReference type="CDD" id="cd00957">
    <property type="entry name" value="Transaldolase_TalAB"/>
    <property type="match status" value="1"/>
</dbReference>
<dbReference type="FunFam" id="3.20.20.70:FF:000002">
    <property type="entry name" value="Transaldolase"/>
    <property type="match status" value="1"/>
</dbReference>
<dbReference type="Gene3D" id="3.20.20.70">
    <property type="entry name" value="Aldolase class I"/>
    <property type="match status" value="1"/>
</dbReference>
<dbReference type="HAMAP" id="MF_00492">
    <property type="entry name" value="Transaldolase_1"/>
    <property type="match status" value="1"/>
</dbReference>
<dbReference type="InterPro" id="IPR013785">
    <property type="entry name" value="Aldolase_TIM"/>
</dbReference>
<dbReference type="InterPro" id="IPR001585">
    <property type="entry name" value="TAL/FSA"/>
</dbReference>
<dbReference type="InterPro" id="IPR004730">
    <property type="entry name" value="Transaldolase_1"/>
</dbReference>
<dbReference type="InterPro" id="IPR018225">
    <property type="entry name" value="Transaldolase_AS"/>
</dbReference>
<dbReference type="NCBIfam" id="NF009001">
    <property type="entry name" value="PRK12346.1"/>
    <property type="match status" value="1"/>
</dbReference>
<dbReference type="NCBIfam" id="TIGR00874">
    <property type="entry name" value="talAB"/>
    <property type="match status" value="1"/>
</dbReference>
<dbReference type="PANTHER" id="PTHR10683">
    <property type="entry name" value="TRANSALDOLASE"/>
    <property type="match status" value="1"/>
</dbReference>
<dbReference type="PANTHER" id="PTHR10683:SF18">
    <property type="entry name" value="TRANSALDOLASE"/>
    <property type="match status" value="1"/>
</dbReference>
<dbReference type="Pfam" id="PF00923">
    <property type="entry name" value="TAL_FSA"/>
    <property type="match status" value="1"/>
</dbReference>
<dbReference type="SUPFAM" id="SSF51569">
    <property type="entry name" value="Aldolase"/>
    <property type="match status" value="1"/>
</dbReference>
<dbReference type="PROSITE" id="PS01054">
    <property type="entry name" value="TRANSALDOLASE_1"/>
    <property type="match status" value="1"/>
</dbReference>
<dbReference type="PROSITE" id="PS00958">
    <property type="entry name" value="TRANSALDOLASE_2"/>
    <property type="match status" value="1"/>
</dbReference>
<reference key="1">
    <citation type="journal article" date="2003" name="Lancet">
        <title>Genome sequence of Vibrio parahaemolyticus: a pathogenic mechanism distinct from that of V. cholerae.</title>
        <authorList>
            <person name="Makino K."/>
            <person name="Oshima K."/>
            <person name="Kurokawa K."/>
            <person name="Yokoyama K."/>
            <person name="Uda T."/>
            <person name="Tagomori K."/>
            <person name="Iijima Y."/>
            <person name="Najima M."/>
            <person name="Nakano M."/>
            <person name="Yamashita A."/>
            <person name="Kubota Y."/>
            <person name="Kimura S."/>
            <person name="Yasunaga T."/>
            <person name="Honda T."/>
            <person name="Shinagawa H."/>
            <person name="Hattori M."/>
            <person name="Iida T."/>
        </authorList>
    </citation>
    <scope>NUCLEOTIDE SEQUENCE [LARGE SCALE GENOMIC DNA]</scope>
    <source>
        <strain>RIMD 2210633</strain>
    </source>
</reference>
<feature type="chain" id="PRO_0000173621" description="Transaldolase">
    <location>
        <begin position="1"/>
        <end position="316"/>
    </location>
</feature>
<feature type="active site" description="Schiff-base intermediate with substrate" evidence="2">
    <location>
        <position position="132"/>
    </location>
</feature>
<proteinExistence type="inferred from homology"/>
<gene>
    <name evidence="2" type="primary">tal</name>
    <name type="ordered locus">VPA1180</name>
</gene>